<reference key="1">
    <citation type="journal article" date="2006" name="Biochemistry">
        <title>Structural and functional diversities among mu-conotoxins targeting TTX-resistant sodium channels.</title>
        <authorList>
            <person name="Zhang M.-M."/>
            <person name="Fiedler B."/>
            <person name="Green B.R."/>
            <person name="Catlin P."/>
            <person name="Watkins M."/>
            <person name="Garrett J.E."/>
            <person name="Smith B.J."/>
            <person name="Yoshikami D."/>
            <person name="Olivera B.M."/>
            <person name="Bulaj G."/>
        </authorList>
    </citation>
    <scope>NUCLEOTIDE SEQUENCE [MRNA]</scope>
    <scope>SYNTHESIS</scope>
    <scope>AMIDATION AT CYS-22</scope>
    <source>
        <tissue>Venom duct</tissue>
    </source>
</reference>
<reference key="2">
    <citation type="journal article" date="2009" name="J. Proteomics">
        <title>Comparative proteomic study of the venom of the piscivorous cone snail Conus consors.</title>
        <authorList>
            <person name="Biass D."/>
            <person name="Dutertre S."/>
            <person name="Gerbault A."/>
            <person name="Menou J.L."/>
            <person name="Offord R."/>
            <person name="Favreau P."/>
            <person name="Stocklin R."/>
        </authorList>
    </citation>
    <scope>TISSUE SPECIFICITY</scope>
</reference>
<reference key="3">
    <citation type="journal article" date="2011" name="Proc. Natl. Acad. Sci. U.S.A.">
        <title>mu-Conotoxins that differentially block sodium channels Nav1.1 through 1.8 identify those responsible for action potentials in sciatic nerve.</title>
        <authorList>
            <person name="Wilson M.J."/>
            <person name="Yoshikami D."/>
            <person name="Azam L."/>
            <person name="Gajewiak J."/>
            <person name="Olivera B.M."/>
            <person name="Bulaj G."/>
            <person name="Zhang M.M."/>
        </authorList>
    </citation>
    <scope>FUNCTION ON SODIUM CHANNELS</scope>
    <scope>SYNTHESIS</scope>
    <scope>AMIDATION AT CYS-22</scope>
</reference>
<sequence length="22" mass="2441">GRCCDVPNACSGRWCRDHAQCC</sequence>
<comment type="function">
    <text evidence="2 4">Mu-conotoxins block voltage-gated sodium channels (Nav). This synthetic toxin moderately blocks rNav1.1/SCN1A, rNav1.2/SCN2A, rNav1.3/SCN3A, rNav1.4/SCN4A, rNav1.5/SCN5A, and mNav1.6/SCN8A (PubMed:21652775). This block is very slowly reversible (PubMed:16533055). Causes seizures when injected intracranially into mice.</text>
</comment>
<comment type="subcellular location">
    <subcellularLocation>
        <location evidence="7">Secreted</location>
    </subcellularLocation>
</comment>
<comment type="tissue specificity">
    <text evidence="3">Expressed by the venom duct. Has not been isolated from the crude venom.</text>
</comment>
<comment type="domain">
    <text evidence="6">The cysteine framework is III (CC-C-C-CC). Classified in the M-5 branch, since 5 residues stand between the fourth and the fifth cysteine residues.</text>
</comment>
<comment type="miscellaneous">
    <text evidence="8">Negative results: does not inhibit Nav1.7/SCN9A and Nav1.8/SCN10A.</text>
</comment>
<comment type="similarity">
    <text evidence="6">Belongs to the conotoxin M superfamily.</text>
</comment>
<proteinExistence type="evidence at protein level"/>
<keyword id="KW-0027">Amidation</keyword>
<keyword id="KW-1015">Disulfide bond</keyword>
<keyword id="KW-0872">Ion channel impairing toxin</keyword>
<keyword id="KW-0528">Neurotoxin</keyword>
<keyword id="KW-0964">Secreted</keyword>
<keyword id="KW-0800">Toxin</keyword>
<keyword id="KW-0738">Voltage-gated sodium channel impairing toxin</keyword>
<feature type="peptide" id="PRO_0000249198" description="Mu-conotoxin CnIIIA" evidence="7">
    <location>
        <begin position="1"/>
        <end position="22"/>
    </location>
</feature>
<feature type="modified residue" description="Cysteine amide" evidence="7 8">
    <location>
        <position position="22"/>
    </location>
</feature>
<feature type="disulfide bond" evidence="1">
    <location>
        <begin position="3"/>
        <end position="15"/>
    </location>
</feature>
<feature type="disulfide bond" evidence="1">
    <location>
        <begin position="4"/>
        <end position="21"/>
    </location>
</feature>
<feature type="disulfide bond" evidence="1">
    <location>
        <begin position="10"/>
        <end position="22"/>
    </location>
</feature>
<dbReference type="ConoServer" id="1693">
    <property type="toxin name" value="CnIIIA"/>
</dbReference>
<dbReference type="GO" id="GO:0005576">
    <property type="term" value="C:extracellular region"/>
    <property type="evidence" value="ECO:0007669"/>
    <property type="project" value="UniProtKB-SubCell"/>
</dbReference>
<dbReference type="GO" id="GO:0017080">
    <property type="term" value="F:sodium channel regulator activity"/>
    <property type="evidence" value="ECO:0007669"/>
    <property type="project" value="UniProtKB-KW"/>
</dbReference>
<dbReference type="GO" id="GO:0090729">
    <property type="term" value="F:toxin activity"/>
    <property type="evidence" value="ECO:0007669"/>
    <property type="project" value="UniProtKB-KW"/>
</dbReference>
<organism>
    <name type="scientific">Conus consors</name>
    <name type="common">Singed cone</name>
    <dbReference type="NCBI Taxonomy" id="101297"/>
    <lineage>
        <taxon>Eukaryota</taxon>
        <taxon>Metazoa</taxon>
        <taxon>Spiralia</taxon>
        <taxon>Lophotrochozoa</taxon>
        <taxon>Mollusca</taxon>
        <taxon>Gastropoda</taxon>
        <taxon>Caenogastropoda</taxon>
        <taxon>Neogastropoda</taxon>
        <taxon>Conoidea</taxon>
        <taxon>Conidae</taxon>
        <taxon>Conus</taxon>
        <taxon>Pionoconus</taxon>
    </lineage>
</organism>
<evidence type="ECO:0000250" key="1"/>
<evidence type="ECO:0000269" key="2">
    <source>
    </source>
</evidence>
<evidence type="ECO:0000269" key="3">
    <source>
    </source>
</evidence>
<evidence type="ECO:0000269" key="4">
    <source>
    </source>
</evidence>
<evidence type="ECO:0000303" key="5">
    <source>
    </source>
</evidence>
<evidence type="ECO:0000305" key="6"/>
<evidence type="ECO:0000305" key="7">
    <source>
    </source>
</evidence>
<evidence type="ECO:0000305" key="8">
    <source>
    </source>
</evidence>
<protein>
    <recommendedName>
        <fullName evidence="5">Mu-conotoxin CnIIIA</fullName>
    </recommendedName>
</protein>
<name>CM3A_CONCN</name>
<accession>P0C1T9</accession>